<proteinExistence type="inferred from homology"/>
<dbReference type="EC" id="7.1.1.-" evidence="1"/>
<dbReference type="EMBL" id="CP000284">
    <property type="protein sequence ID" value="ABE50325.1"/>
    <property type="molecule type" value="Genomic_DNA"/>
</dbReference>
<dbReference type="RefSeq" id="WP_011480279.1">
    <property type="nucleotide sequence ID" value="NC_007947.1"/>
</dbReference>
<dbReference type="SMR" id="Q1GZL2"/>
<dbReference type="STRING" id="265072.Mfla_2058"/>
<dbReference type="KEGG" id="mfa:Mfla_2058"/>
<dbReference type="eggNOG" id="COG0649">
    <property type="taxonomic scope" value="Bacteria"/>
</dbReference>
<dbReference type="HOGENOM" id="CLU_015134_1_1_4"/>
<dbReference type="OrthoDB" id="9801496at2"/>
<dbReference type="Proteomes" id="UP000002440">
    <property type="component" value="Chromosome"/>
</dbReference>
<dbReference type="GO" id="GO:0005886">
    <property type="term" value="C:plasma membrane"/>
    <property type="evidence" value="ECO:0007669"/>
    <property type="project" value="UniProtKB-SubCell"/>
</dbReference>
<dbReference type="GO" id="GO:0051287">
    <property type="term" value="F:NAD binding"/>
    <property type="evidence" value="ECO:0007669"/>
    <property type="project" value="InterPro"/>
</dbReference>
<dbReference type="GO" id="GO:0050136">
    <property type="term" value="F:NADH:ubiquinone reductase (non-electrogenic) activity"/>
    <property type="evidence" value="ECO:0007669"/>
    <property type="project" value="UniProtKB-UniRule"/>
</dbReference>
<dbReference type="GO" id="GO:0048038">
    <property type="term" value="F:quinone binding"/>
    <property type="evidence" value="ECO:0007669"/>
    <property type="project" value="UniProtKB-KW"/>
</dbReference>
<dbReference type="FunFam" id="1.10.645.10:FF:000005">
    <property type="entry name" value="NADH-quinone oxidoreductase subunit D"/>
    <property type="match status" value="1"/>
</dbReference>
<dbReference type="Gene3D" id="1.10.645.10">
    <property type="entry name" value="Cytochrome-c3 Hydrogenase, chain B"/>
    <property type="match status" value="1"/>
</dbReference>
<dbReference type="HAMAP" id="MF_01358">
    <property type="entry name" value="NDH1_NuoD"/>
    <property type="match status" value="1"/>
</dbReference>
<dbReference type="InterPro" id="IPR001135">
    <property type="entry name" value="NADH_Q_OxRdtase_suD"/>
</dbReference>
<dbReference type="InterPro" id="IPR014029">
    <property type="entry name" value="NADH_UbQ_OxRdtase_49kDa_CS"/>
</dbReference>
<dbReference type="InterPro" id="IPR022885">
    <property type="entry name" value="NDH1_su_D/H"/>
</dbReference>
<dbReference type="InterPro" id="IPR029014">
    <property type="entry name" value="NiFe-Hase_large"/>
</dbReference>
<dbReference type="NCBIfam" id="TIGR01962">
    <property type="entry name" value="NuoD"/>
    <property type="match status" value="1"/>
</dbReference>
<dbReference type="NCBIfam" id="NF004739">
    <property type="entry name" value="PRK06075.1"/>
    <property type="match status" value="1"/>
</dbReference>
<dbReference type="PANTHER" id="PTHR11993:SF10">
    <property type="entry name" value="NADH DEHYDROGENASE [UBIQUINONE] IRON-SULFUR PROTEIN 2, MITOCHONDRIAL"/>
    <property type="match status" value="1"/>
</dbReference>
<dbReference type="PANTHER" id="PTHR11993">
    <property type="entry name" value="NADH-UBIQUINONE OXIDOREDUCTASE 49 KDA SUBUNIT"/>
    <property type="match status" value="1"/>
</dbReference>
<dbReference type="Pfam" id="PF00346">
    <property type="entry name" value="Complex1_49kDa"/>
    <property type="match status" value="1"/>
</dbReference>
<dbReference type="SUPFAM" id="SSF56762">
    <property type="entry name" value="HydB/Nqo4-like"/>
    <property type="match status" value="1"/>
</dbReference>
<dbReference type="PROSITE" id="PS00535">
    <property type="entry name" value="COMPLEX1_49K"/>
    <property type="match status" value="1"/>
</dbReference>
<name>NUOD_METFK</name>
<sequence length="417" mass="47877">MAEIRNYTMNFGPQHPAAHGVLRLVLELDGEVIQRADPHIGLLHRGTEKLAENRTYLQSVPYMDRLDYVSMMVNEHAYVMAIEKLLGLEVPLRAQYIRVMFDEITRILNHLLWLGAHALDVGAMTVFLYAFREREDLFDCYEAVSGARMHAAYYRPGGVYRDLPDRMPQYEESTVRSKEDVKQLNENRQGSLLDFIEDFTNRFPAYVDEYETLLTDNRIWKQRTVGIGVVSPERAMALGMTGPMLRGSGVAWDLRKKQPYEVYDRLDFDIPIGVNGDCYDRYLVRIEEFRQSNRIIKQCIDWLRKNPGPVISDNTKVAPPPREEMKHDMEALIHHFKLFTEGFHVPAGEAYAAVEHPKGEFGIYLISDGANKPYRLKIRAPGFAHLAALDEMTRGHMIADLVAIIGTQDIVFGEIDR</sequence>
<keyword id="KW-0997">Cell inner membrane</keyword>
<keyword id="KW-1003">Cell membrane</keyword>
<keyword id="KW-0472">Membrane</keyword>
<keyword id="KW-0520">NAD</keyword>
<keyword id="KW-0874">Quinone</keyword>
<keyword id="KW-1185">Reference proteome</keyword>
<keyword id="KW-1278">Translocase</keyword>
<keyword id="KW-0813">Transport</keyword>
<keyword id="KW-0830">Ubiquinone</keyword>
<organism>
    <name type="scientific">Methylobacillus flagellatus (strain ATCC 51484 / DSM 6875 / VKM B-1610 / KT)</name>
    <dbReference type="NCBI Taxonomy" id="265072"/>
    <lineage>
        <taxon>Bacteria</taxon>
        <taxon>Pseudomonadati</taxon>
        <taxon>Pseudomonadota</taxon>
        <taxon>Betaproteobacteria</taxon>
        <taxon>Nitrosomonadales</taxon>
        <taxon>Methylophilaceae</taxon>
        <taxon>Methylobacillus</taxon>
    </lineage>
</organism>
<accession>Q1GZL2</accession>
<gene>
    <name evidence="1" type="primary">nuoD</name>
    <name type="ordered locus">Mfla_2058</name>
</gene>
<evidence type="ECO:0000255" key="1">
    <source>
        <dbReference type="HAMAP-Rule" id="MF_01358"/>
    </source>
</evidence>
<comment type="function">
    <text evidence="1">NDH-1 shuttles electrons from NADH, via FMN and iron-sulfur (Fe-S) centers, to quinones in the respiratory chain. The immediate electron acceptor for the enzyme in this species is believed to be ubiquinone. Couples the redox reaction to proton translocation (for every two electrons transferred, four hydrogen ions are translocated across the cytoplasmic membrane), and thus conserves the redox energy in a proton gradient.</text>
</comment>
<comment type="catalytic activity">
    <reaction evidence="1">
        <text>a quinone + NADH + 5 H(+)(in) = a quinol + NAD(+) + 4 H(+)(out)</text>
        <dbReference type="Rhea" id="RHEA:57888"/>
        <dbReference type="ChEBI" id="CHEBI:15378"/>
        <dbReference type="ChEBI" id="CHEBI:24646"/>
        <dbReference type="ChEBI" id="CHEBI:57540"/>
        <dbReference type="ChEBI" id="CHEBI:57945"/>
        <dbReference type="ChEBI" id="CHEBI:132124"/>
    </reaction>
</comment>
<comment type="subunit">
    <text evidence="1">NDH-1 is composed of 14 different subunits. Subunits NuoB, C, D, E, F, and G constitute the peripheral sector of the complex.</text>
</comment>
<comment type="subcellular location">
    <subcellularLocation>
        <location evidence="1">Cell inner membrane</location>
        <topology evidence="1">Peripheral membrane protein</topology>
        <orientation evidence="1">Cytoplasmic side</orientation>
    </subcellularLocation>
</comment>
<comment type="similarity">
    <text evidence="1">Belongs to the complex I 49 kDa subunit family.</text>
</comment>
<protein>
    <recommendedName>
        <fullName evidence="1">NADH-quinone oxidoreductase subunit D</fullName>
        <ecNumber evidence="1">7.1.1.-</ecNumber>
    </recommendedName>
    <alternativeName>
        <fullName evidence="1">NADH dehydrogenase I subunit D</fullName>
    </alternativeName>
    <alternativeName>
        <fullName evidence="1">NDH-1 subunit D</fullName>
    </alternativeName>
</protein>
<reference key="1">
    <citation type="submission" date="2006-03" db="EMBL/GenBank/DDBJ databases">
        <title>Complete sequence of Methylobacillus flagellatus KT.</title>
        <authorList>
            <consortium name="US DOE Joint Genome Institute"/>
            <person name="Copeland A."/>
            <person name="Lucas S."/>
            <person name="Lapidus A."/>
            <person name="Barry K."/>
            <person name="Detter J.C."/>
            <person name="Glavina del Rio T."/>
            <person name="Hammon N."/>
            <person name="Israni S."/>
            <person name="Dalin E."/>
            <person name="Tice H."/>
            <person name="Pitluck S."/>
            <person name="Brettin T."/>
            <person name="Bruce D."/>
            <person name="Han C."/>
            <person name="Tapia R."/>
            <person name="Saunders E."/>
            <person name="Gilna P."/>
            <person name="Schmutz J."/>
            <person name="Larimer F."/>
            <person name="Land M."/>
            <person name="Kyrpides N."/>
            <person name="Anderson I."/>
            <person name="Richardson P."/>
        </authorList>
    </citation>
    <scope>NUCLEOTIDE SEQUENCE [LARGE SCALE GENOMIC DNA]</scope>
    <source>
        <strain>ATCC 51484 / DSM 6875 / VKM B-1610 / KT</strain>
    </source>
</reference>
<feature type="chain" id="PRO_0000357847" description="NADH-quinone oxidoreductase subunit D">
    <location>
        <begin position="1"/>
        <end position="417"/>
    </location>
</feature>